<dbReference type="EC" id="4.1.1.50" evidence="1"/>
<dbReference type="EMBL" id="FM209186">
    <property type="protein sequence ID" value="CAW25360.1"/>
    <property type="molecule type" value="Genomic_DNA"/>
</dbReference>
<dbReference type="RefSeq" id="WP_003101641.1">
    <property type="nucleotide sequence ID" value="NC_011770.1"/>
</dbReference>
<dbReference type="SMR" id="B7V612"/>
<dbReference type="KEGG" id="pag:PLES_06331"/>
<dbReference type="HOGENOM" id="CLU_092007_0_0_6"/>
<dbReference type="UniPathway" id="UPA00331">
    <property type="reaction ID" value="UER00451"/>
</dbReference>
<dbReference type="GO" id="GO:0005829">
    <property type="term" value="C:cytosol"/>
    <property type="evidence" value="ECO:0007669"/>
    <property type="project" value="TreeGrafter"/>
</dbReference>
<dbReference type="GO" id="GO:0004014">
    <property type="term" value="F:adenosylmethionine decarboxylase activity"/>
    <property type="evidence" value="ECO:0007669"/>
    <property type="project" value="UniProtKB-UniRule"/>
</dbReference>
<dbReference type="GO" id="GO:0008295">
    <property type="term" value="P:spermidine biosynthetic process"/>
    <property type="evidence" value="ECO:0007669"/>
    <property type="project" value="UniProtKB-UniRule"/>
</dbReference>
<dbReference type="FunFam" id="3.60.90.10:FF:000001">
    <property type="entry name" value="S-adenosylmethionine decarboxylase proenzyme"/>
    <property type="match status" value="1"/>
</dbReference>
<dbReference type="Gene3D" id="3.60.90.10">
    <property type="entry name" value="S-adenosylmethionine decarboxylase"/>
    <property type="match status" value="1"/>
</dbReference>
<dbReference type="HAMAP" id="MF_00465">
    <property type="entry name" value="AdoMetDC_2"/>
    <property type="match status" value="1"/>
</dbReference>
<dbReference type="InterPro" id="IPR003826">
    <property type="entry name" value="AdoMetDC_fam_prok"/>
</dbReference>
<dbReference type="InterPro" id="IPR009165">
    <property type="entry name" value="S-AdoMet_deCO2ase_bac"/>
</dbReference>
<dbReference type="InterPro" id="IPR016067">
    <property type="entry name" value="S-AdoMet_deCO2ase_core"/>
</dbReference>
<dbReference type="NCBIfam" id="TIGR03331">
    <property type="entry name" value="SAM_DCase_Eco"/>
    <property type="match status" value="1"/>
</dbReference>
<dbReference type="PANTHER" id="PTHR33866">
    <property type="entry name" value="S-ADENOSYLMETHIONINE DECARBOXYLASE PROENZYME"/>
    <property type="match status" value="1"/>
</dbReference>
<dbReference type="PANTHER" id="PTHR33866:SF1">
    <property type="entry name" value="S-ADENOSYLMETHIONINE DECARBOXYLASE PROENZYME"/>
    <property type="match status" value="1"/>
</dbReference>
<dbReference type="Pfam" id="PF02675">
    <property type="entry name" value="AdoMet_dc"/>
    <property type="match status" value="1"/>
</dbReference>
<dbReference type="PIRSF" id="PIRSF001356">
    <property type="entry name" value="SAM_decarboxylas"/>
    <property type="match status" value="1"/>
</dbReference>
<dbReference type="SUPFAM" id="SSF56276">
    <property type="entry name" value="S-adenosylmethionine decarboxylase"/>
    <property type="match status" value="1"/>
</dbReference>
<keyword id="KW-0068">Autocatalytic cleavage</keyword>
<keyword id="KW-0210">Decarboxylase</keyword>
<keyword id="KW-0456">Lyase</keyword>
<keyword id="KW-0620">Polyamine biosynthesis</keyword>
<keyword id="KW-0670">Pyruvate</keyword>
<keyword id="KW-0949">S-adenosyl-L-methionine</keyword>
<keyword id="KW-0704">Schiff base</keyword>
<keyword id="KW-0745">Spermidine biosynthesis</keyword>
<keyword id="KW-0865">Zymogen</keyword>
<evidence type="ECO:0000255" key="1">
    <source>
        <dbReference type="HAMAP-Rule" id="MF_00465"/>
    </source>
</evidence>
<sequence>MKSKLKLHGFNNLTKTLSFNIYDICYAETPEDLQAYVQYIDEEYDAERLTQILTDVVDIIGANILNIARQDYDPQGASVTILISEQPVTPTDSQIEESPGPLPDTILAHLDKSHITVHTYPEIHPVDGIATFRVDIDVSTCGVISPLKALNYLIHQFDSDIVTVDYRVRGFTRDIEGRKHFIDHEINSIQNYLSDDTREAYQMTDVNVYQENLFHTKMLLKDFELENYLFGDATRTLSAEQREQVTERLKHEMLEIFYARNMPR</sequence>
<accession>B7V612</accession>
<proteinExistence type="inferred from homology"/>
<feature type="chain" id="PRO_1000125487" description="S-adenosylmethionine decarboxylase beta chain" evidence="1">
    <location>
        <begin position="1"/>
        <end position="112"/>
    </location>
</feature>
<feature type="chain" id="PRO_1000125488" description="S-adenosylmethionine decarboxylase alpha chain" evidence="1">
    <location>
        <begin position="113"/>
        <end position="264"/>
    </location>
</feature>
<feature type="active site" description="Schiff-base intermediate with substrate; via pyruvic acid" evidence="1">
    <location>
        <position position="113"/>
    </location>
</feature>
<feature type="active site" description="Proton acceptor; for processing activity" evidence="1">
    <location>
        <position position="118"/>
    </location>
</feature>
<feature type="active site" description="Proton donor; for catalytic activity" evidence="1">
    <location>
        <position position="141"/>
    </location>
</feature>
<feature type="site" description="Cleavage (non-hydrolytic); by autolysis" evidence="1">
    <location>
        <begin position="112"/>
        <end position="113"/>
    </location>
</feature>
<feature type="modified residue" description="Pyruvic acid (Ser); by autocatalysis" evidence="1">
    <location>
        <position position="113"/>
    </location>
</feature>
<reference key="1">
    <citation type="journal article" date="2009" name="Genome Res.">
        <title>Newly introduced genomic prophage islands are critical determinants of in vivo competitiveness in the Liverpool epidemic strain of Pseudomonas aeruginosa.</title>
        <authorList>
            <person name="Winstanley C."/>
            <person name="Langille M.G.I."/>
            <person name="Fothergill J.L."/>
            <person name="Kukavica-Ibrulj I."/>
            <person name="Paradis-Bleau C."/>
            <person name="Sanschagrin F."/>
            <person name="Thomson N.R."/>
            <person name="Winsor G.L."/>
            <person name="Quail M.A."/>
            <person name="Lennard N."/>
            <person name="Bignell A."/>
            <person name="Clarke L."/>
            <person name="Seeger K."/>
            <person name="Saunders D."/>
            <person name="Harris D."/>
            <person name="Parkhill J."/>
            <person name="Hancock R.E.W."/>
            <person name="Brinkman F.S.L."/>
            <person name="Levesque R.C."/>
        </authorList>
    </citation>
    <scope>NUCLEOTIDE SEQUENCE [LARGE SCALE GENOMIC DNA]</scope>
    <source>
        <strain>LESB58</strain>
    </source>
</reference>
<protein>
    <recommendedName>
        <fullName evidence="1">S-adenosylmethionine decarboxylase proenzyme</fullName>
        <shortName evidence="1">AdoMetDC</shortName>
        <shortName evidence="1">SAMDC</shortName>
        <ecNumber evidence="1">4.1.1.50</ecNumber>
    </recommendedName>
    <component>
        <recommendedName>
            <fullName evidence="1">S-adenosylmethionine decarboxylase beta chain</fullName>
        </recommendedName>
    </component>
    <component>
        <recommendedName>
            <fullName evidence="1">S-adenosylmethionine decarboxylase alpha chain</fullName>
        </recommendedName>
    </component>
</protein>
<name>SPED_PSEA8</name>
<gene>
    <name evidence="1" type="primary">speD</name>
    <name type="ordered locus">PLES_06331</name>
</gene>
<comment type="function">
    <text evidence="1">Catalyzes the decarboxylation of S-adenosylmethionine to S-adenosylmethioninamine (dcAdoMet), the propylamine donor required for the synthesis of the polyamines spermine and spermidine from the diamine putrescine.</text>
</comment>
<comment type="catalytic activity">
    <reaction evidence="1">
        <text>S-adenosyl-L-methionine + H(+) = S-adenosyl 3-(methylsulfanyl)propylamine + CO2</text>
        <dbReference type="Rhea" id="RHEA:15981"/>
        <dbReference type="ChEBI" id="CHEBI:15378"/>
        <dbReference type="ChEBI" id="CHEBI:16526"/>
        <dbReference type="ChEBI" id="CHEBI:57443"/>
        <dbReference type="ChEBI" id="CHEBI:59789"/>
        <dbReference type="EC" id="4.1.1.50"/>
    </reaction>
</comment>
<comment type="cofactor">
    <cofactor evidence="1">
        <name>pyruvate</name>
        <dbReference type="ChEBI" id="CHEBI:15361"/>
    </cofactor>
    <text evidence="1">Binds 1 pyruvoyl group covalently per subunit.</text>
</comment>
<comment type="pathway">
    <text evidence="1">Amine and polyamine biosynthesis; S-adenosylmethioninamine biosynthesis; S-adenosylmethioninamine from S-adenosyl-L-methionine: step 1/1.</text>
</comment>
<comment type="subunit">
    <text evidence="1">Heterooctamer of four alpha and four beta chains arranged as a tetramer of alpha/beta heterodimers.</text>
</comment>
<comment type="PTM">
    <text evidence="1">Is synthesized initially as an inactive proenzyme. Formation of the active enzyme involves a self-maturation process in which the active site pyruvoyl group is generated from an internal serine residue via an autocatalytic post-translational modification. Two non-identical subunits are generated from the proenzyme in this reaction, and the pyruvate is formed at the N-terminus of the alpha chain, which is derived from the carboxyl end of the proenzyme. The post-translation cleavage follows an unusual pathway, termed non-hydrolytic serinolysis, in which the side chain hydroxyl group of the serine supplies its oxygen atom to form the C-terminus of the beta chain, while the remainder of the serine residue undergoes an oxidative deamination to produce ammonia and the pyruvoyl group blocking the N-terminus of the alpha chain.</text>
</comment>
<comment type="similarity">
    <text evidence="1">Belongs to the prokaryotic AdoMetDC family. Type 2 subfamily.</text>
</comment>
<organism>
    <name type="scientific">Pseudomonas aeruginosa (strain LESB58)</name>
    <dbReference type="NCBI Taxonomy" id="557722"/>
    <lineage>
        <taxon>Bacteria</taxon>
        <taxon>Pseudomonadati</taxon>
        <taxon>Pseudomonadota</taxon>
        <taxon>Gammaproteobacteria</taxon>
        <taxon>Pseudomonadales</taxon>
        <taxon>Pseudomonadaceae</taxon>
        <taxon>Pseudomonas</taxon>
    </lineage>
</organism>